<proteinExistence type="inferred from homology"/>
<feature type="chain" id="PRO_1000144347" description="Large ribosomal subunit protein uL14">
    <location>
        <begin position="1"/>
        <end position="122"/>
    </location>
</feature>
<accession>B1GZ93</accession>
<evidence type="ECO:0000255" key="1">
    <source>
        <dbReference type="HAMAP-Rule" id="MF_01367"/>
    </source>
</evidence>
<evidence type="ECO:0000305" key="2"/>
<comment type="function">
    <text evidence="1">Binds to 23S rRNA. Forms part of two intersubunit bridges in the 70S ribosome.</text>
</comment>
<comment type="subunit">
    <text evidence="1">Part of the 50S ribosomal subunit. Forms a cluster with proteins L3 and L19. In the 70S ribosome, L14 and L19 interact and together make contacts with the 16S rRNA in bridges B5 and B8.</text>
</comment>
<comment type="similarity">
    <text evidence="1">Belongs to the universal ribosomal protein uL14 family.</text>
</comment>
<reference key="1">
    <citation type="journal article" date="2008" name="Proc. Natl. Acad. Sci. U.S.A.">
        <title>Complete genome of the uncultured termite group 1 bacteria in a single host protist cell.</title>
        <authorList>
            <person name="Hongoh Y."/>
            <person name="Sharma V.K."/>
            <person name="Prakash T."/>
            <person name="Noda S."/>
            <person name="Taylor T.D."/>
            <person name="Kudo T."/>
            <person name="Sakaki Y."/>
            <person name="Toyoda A."/>
            <person name="Hattori M."/>
            <person name="Ohkuma M."/>
        </authorList>
    </citation>
    <scope>NUCLEOTIDE SEQUENCE [LARGE SCALE GENOMIC DNA]</scope>
</reference>
<name>RL14_ENDTX</name>
<sequence>MIQERTILNVADNSGARKIRCFRVTKGLKRRYASIGDVIHASVQDALPHANVKKGDVVKAVVVRTVKEIRRADGTYIKFDDNATVIINDEGEPKGTRIFGPVAKELRENNYLKIISLAPEVI</sequence>
<protein>
    <recommendedName>
        <fullName evidence="1">Large ribosomal subunit protein uL14</fullName>
    </recommendedName>
    <alternativeName>
        <fullName evidence="2">50S ribosomal protein L14</fullName>
    </alternativeName>
</protein>
<dbReference type="EMBL" id="AP009510">
    <property type="protein sequence ID" value="BAG13575.1"/>
    <property type="molecule type" value="Genomic_DNA"/>
</dbReference>
<dbReference type="RefSeq" id="WP_015423104.1">
    <property type="nucleotide sequence ID" value="NC_020419.1"/>
</dbReference>
<dbReference type="SMR" id="B1GZ93"/>
<dbReference type="STRING" id="471821.TGRD_092"/>
<dbReference type="KEGG" id="eti:RSTT_077"/>
<dbReference type="KEGG" id="rsd:TGRD_092"/>
<dbReference type="PATRIC" id="fig|471821.5.peg.136"/>
<dbReference type="HOGENOM" id="CLU_095071_2_1_0"/>
<dbReference type="OrthoDB" id="9806379at2"/>
<dbReference type="Proteomes" id="UP000001691">
    <property type="component" value="Chromosome"/>
</dbReference>
<dbReference type="GO" id="GO:0022625">
    <property type="term" value="C:cytosolic large ribosomal subunit"/>
    <property type="evidence" value="ECO:0007669"/>
    <property type="project" value="TreeGrafter"/>
</dbReference>
<dbReference type="GO" id="GO:0070180">
    <property type="term" value="F:large ribosomal subunit rRNA binding"/>
    <property type="evidence" value="ECO:0007669"/>
    <property type="project" value="TreeGrafter"/>
</dbReference>
<dbReference type="GO" id="GO:0003735">
    <property type="term" value="F:structural constituent of ribosome"/>
    <property type="evidence" value="ECO:0007669"/>
    <property type="project" value="InterPro"/>
</dbReference>
<dbReference type="GO" id="GO:0006412">
    <property type="term" value="P:translation"/>
    <property type="evidence" value="ECO:0007669"/>
    <property type="project" value="UniProtKB-UniRule"/>
</dbReference>
<dbReference type="CDD" id="cd00337">
    <property type="entry name" value="Ribosomal_uL14"/>
    <property type="match status" value="1"/>
</dbReference>
<dbReference type="FunFam" id="2.40.150.20:FF:000001">
    <property type="entry name" value="50S ribosomal protein L14"/>
    <property type="match status" value="1"/>
</dbReference>
<dbReference type="Gene3D" id="2.40.150.20">
    <property type="entry name" value="Ribosomal protein L14"/>
    <property type="match status" value="1"/>
</dbReference>
<dbReference type="HAMAP" id="MF_01367">
    <property type="entry name" value="Ribosomal_uL14"/>
    <property type="match status" value="1"/>
</dbReference>
<dbReference type="InterPro" id="IPR000218">
    <property type="entry name" value="Ribosomal_uL14"/>
</dbReference>
<dbReference type="InterPro" id="IPR005745">
    <property type="entry name" value="Ribosomal_uL14_bac-type"/>
</dbReference>
<dbReference type="InterPro" id="IPR019972">
    <property type="entry name" value="Ribosomal_uL14_CS"/>
</dbReference>
<dbReference type="InterPro" id="IPR036853">
    <property type="entry name" value="Ribosomal_uL14_sf"/>
</dbReference>
<dbReference type="NCBIfam" id="TIGR01067">
    <property type="entry name" value="rplN_bact"/>
    <property type="match status" value="1"/>
</dbReference>
<dbReference type="PANTHER" id="PTHR11761">
    <property type="entry name" value="50S/60S RIBOSOMAL PROTEIN L14/L23"/>
    <property type="match status" value="1"/>
</dbReference>
<dbReference type="PANTHER" id="PTHR11761:SF3">
    <property type="entry name" value="LARGE RIBOSOMAL SUBUNIT PROTEIN UL14M"/>
    <property type="match status" value="1"/>
</dbReference>
<dbReference type="Pfam" id="PF00238">
    <property type="entry name" value="Ribosomal_L14"/>
    <property type="match status" value="1"/>
</dbReference>
<dbReference type="SMART" id="SM01374">
    <property type="entry name" value="Ribosomal_L14"/>
    <property type="match status" value="1"/>
</dbReference>
<dbReference type="SUPFAM" id="SSF50193">
    <property type="entry name" value="Ribosomal protein L14"/>
    <property type="match status" value="1"/>
</dbReference>
<dbReference type="PROSITE" id="PS00049">
    <property type="entry name" value="RIBOSOMAL_L14"/>
    <property type="match status" value="1"/>
</dbReference>
<organism>
    <name type="scientific">Endomicrobium trichonymphae</name>
    <dbReference type="NCBI Taxonomy" id="1408204"/>
    <lineage>
        <taxon>Bacteria</taxon>
        <taxon>Pseudomonadati</taxon>
        <taxon>Elusimicrobiota</taxon>
        <taxon>Endomicrobiia</taxon>
        <taxon>Endomicrobiales</taxon>
        <taxon>Endomicrobiaceae</taxon>
        <taxon>Candidatus Endomicrobiellum</taxon>
    </lineage>
</organism>
<keyword id="KW-0687">Ribonucleoprotein</keyword>
<keyword id="KW-0689">Ribosomal protein</keyword>
<keyword id="KW-0694">RNA-binding</keyword>
<keyword id="KW-0699">rRNA-binding</keyword>
<gene>
    <name evidence="1" type="primary">rplN</name>
    <name type="ordered locus">TGRD_092</name>
</gene>